<proteinExistence type="inferred from homology"/>
<dbReference type="EC" id="2.7.1.33" evidence="1"/>
<dbReference type="EMBL" id="AE016877">
    <property type="protein sequence ID" value="AAP07169.1"/>
    <property type="molecule type" value="Genomic_DNA"/>
</dbReference>
<dbReference type="RefSeq" id="NP_829968.1">
    <property type="nucleotide sequence ID" value="NC_004722.1"/>
</dbReference>
<dbReference type="RefSeq" id="WP_000578368.1">
    <property type="nucleotide sequence ID" value="NZ_CP138336.1"/>
</dbReference>
<dbReference type="SMR" id="Q81J81"/>
<dbReference type="STRING" id="226900.BC_0073"/>
<dbReference type="KEGG" id="bce:BC0073"/>
<dbReference type="PATRIC" id="fig|226900.8.peg.88"/>
<dbReference type="HOGENOM" id="CLU_066627_1_0_9"/>
<dbReference type="OrthoDB" id="9804707at2"/>
<dbReference type="UniPathway" id="UPA00241">
    <property type="reaction ID" value="UER00352"/>
</dbReference>
<dbReference type="Proteomes" id="UP000001417">
    <property type="component" value="Chromosome"/>
</dbReference>
<dbReference type="GO" id="GO:0005737">
    <property type="term" value="C:cytoplasm"/>
    <property type="evidence" value="ECO:0007669"/>
    <property type="project" value="UniProtKB-SubCell"/>
</dbReference>
<dbReference type="GO" id="GO:0005524">
    <property type="term" value="F:ATP binding"/>
    <property type="evidence" value="ECO:0007669"/>
    <property type="project" value="UniProtKB-UniRule"/>
</dbReference>
<dbReference type="GO" id="GO:0046872">
    <property type="term" value="F:metal ion binding"/>
    <property type="evidence" value="ECO:0007669"/>
    <property type="project" value="UniProtKB-KW"/>
</dbReference>
<dbReference type="GO" id="GO:0004594">
    <property type="term" value="F:pantothenate kinase activity"/>
    <property type="evidence" value="ECO:0007669"/>
    <property type="project" value="UniProtKB-UniRule"/>
</dbReference>
<dbReference type="GO" id="GO:0015937">
    <property type="term" value="P:coenzyme A biosynthetic process"/>
    <property type="evidence" value="ECO:0007669"/>
    <property type="project" value="UniProtKB-UniRule"/>
</dbReference>
<dbReference type="CDD" id="cd24015">
    <property type="entry name" value="ASKHA_NBD_PanK-III"/>
    <property type="match status" value="1"/>
</dbReference>
<dbReference type="Gene3D" id="3.30.420.40">
    <property type="match status" value="2"/>
</dbReference>
<dbReference type="HAMAP" id="MF_01274">
    <property type="entry name" value="Pantothen_kinase_3"/>
    <property type="match status" value="1"/>
</dbReference>
<dbReference type="InterPro" id="IPR043129">
    <property type="entry name" value="ATPase_NBD"/>
</dbReference>
<dbReference type="InterPro" id="IPR004619">
    <property type="entry name" value="Type_III_PanK"/>
</dbReference>
<dbReference type="NCBIfam" id="TIGR00671">
    <property type="entry name" value="baf"/>
    <property type="match status" value="1"/>
</dbReference>
<dbReference type="NCBIfam" id="NF009843">
    <property type="entry name" value="PRK13318.1-1"/>
    <property type="match status" value="1"/>
</dbReference>
<dbReference type="NCBIfam" id="NF009847">
    <property type="entry name" value="PRK13318.1-5"/>
    <property type="match status" value="1"/>
</dbReference>
<dbReference type="NCBIfam" id="NF009848">
    <property type="entry name" value="PRK13318.1-6"/>
    <property type="match status" value="1"/>
</dbReference>
<dbReference type="NCBIfam" id="NF009855">
    <property type="entry name" value="PRK13321.1"/>
    <property type="match status" value="1"/>
</dbReference>
<dbReference type="PANTHER" id="PTHR34265">
    <property type="entry name" value="TYPE III PANTOTHENATE KINASE"/>
    <property type="match status" value="1"/>
</dbReference>
<dbReference type="PANTHER" id="PTHR34265:SF1">
    <property type="entry name" value="TYPE III PANTOTHENATE KINASE"/>
    <property type="match status" value="1"/>
</dbReference>
<dbReference type="Pfam" id="PF03309">
    <property type="entry name" value="Pan_kinase"/>
    <property type="match status" value="1"/>
</dbReference>
<dbReference type="SUPFAM" id="SSF53067">
    <property type="entry name" value="Actin-like ATPase domain"/>
    <property type="match status" value="2"/>
</dbReference>
<accession>Q81J81</accession>
<protein>
    <recommendedName>
        <fullName evidence="1">Type III pantothenate kinase</fullName>
        <ecNumber evidence="1">2.7.1.33</ecNumber>
    </recommendedName>
    <alternativeName>
        <fullName evidence="1">PanK-III</fullName>
    </alternativeName>
    <alternativeName>
        <fullName evidence="1">Pantothenic acid kinase</fullName>
    </alternativeName>
</protein>
<evidence type="ECO:0000255" key="1">
    <source>
        <dbReference type="HAMAP-Rule" id="MF_01274"/>
    </source>
</evidence>
<comment type="function">
    <text evidence="1">Catalyzes the phosphorylation of pantothenate (Pan), the first step in CoA biosynthesis.</text>
</comment>
<comment type="catalytic activity">
    <reaction evidence="1">
        <text>(R)-pantothenate + ATP = (R)-4'-phosphopantothenate + ADP + H(+)</text>
        <dbReference type="Rhea" id="RHEA:16373"/>
        <dbReference type="ChEBI" id="CHEBI:10986"/>
        <dbReference type="ChEBI" id="CHEBI:15378"/>
        <dbReference type="ChEBI" id="CHEBI:29032"/>
        <dbReference type="ChEBI" id="CHEBI:30616"/>
        <dbReference type="ChEBI" id="CHEBI:456216"/>
        <dbReference type="EC" id="2.7.1.33"/>
    </reaction>
</comment>
<comment type="cofactor">
    <cofactor evidence="1">
        <name>NH4(+)</name>
        <dbReference type="ChEBI" id="CHEBI:28938"/>
    </cofactor>
    <cofactor evidence="1">
        <name>K(+)</name>
        <dbReference type="ChEBI" id="CHEBI:29103"/>
    </cofactor>
    <text evidence="1">A monovalent cation. Ammonium or potassium.</text>
</comment>
<comment type="pathway">
    <text evidence="1">Cofactor biosynthesis; coenzyme A biosynthesis; CoA from (R)-pantothenate: step 1/5.</text>
</comment>
<comment type="subunit">
    <text evidence="1">Homodimer.</text>
</comment>
<comment type="subcellular location">
    <subcellularLocation>
        <location evidence="1">Cytoplasm</location>
    </subcellularLocation>
</comment>
<comment type="similarity">
    <text evidence="1">Belongs to the type III pantothenate kinase family.</text>
</comment>
<feature type="chain" id="PRO_0000267493" description="Type III pantothenate kinase">
    <location>
        <begin position="1"/>
        <end position="262"/>
    </location>
</feature>
<feature type="active site" description="Proton acceptor" evidence="1">
    <location>
        <position position="109"/>
    </location>
</feature>
<feature type="binding site" evidence="1">
    <location>
        <begin position="6"/>
        <end position="13"/>
    </location>
    <ligand>
        <name>ATP</name>
        <dbReference type="ChEBI" id="CHEBI:30616"/>
    </ligand>
</feature>
<feature type="binding site" evidence="1">
    <location>
        <position position="100"/>
    </location>
    <ligand>
        <name>substrate</name>
    </ligand>
</feature>
<feature type="binding site" evidence="1">
    <location>
        <begin position="107"/>
        <end position="110"/>
    </location>
    <ligand>
        <name>substrate</name>
    </ligand>
</feature>
<feature type="binding site" evidence="1">
    <location>
        <position position="129"/>
    </location>
    <ligand>
        <name>K(+)</name>
        <dbReference type="ChEBI" id="CHEBI:29103"/>
    </ligand>
</feature>
<feature type="binding site" evidence="1">
    <location>
        <position position="132"/>
    </location>
    <ligand>
        <name>ATP</name>
        <dbReference type="ChEBI" id="CHEBI:30616"/>
    </ligand>
</feature>
<feature type="binding site" evidence="1">
    <location>
        <position position="184"/>
    </location>
    <ligand>
        <name>substrate</name>
    </ligand>
</feature>
<reference key="1">
    <citation type="journal article" date="2003" name="Nature">
        <title>Genome sequence of Bacillus cereus and comparative analysis with Bacillus anthracis.</title>
        <authorList>
            <person name="Ivanova N."/>
            <person name="Sorokin A."/>
            <person name="Anderson I."/>
            <person name="Galleron N."/>
            <person name="Candelon B."/>
            <person name="Kapatral V."/>
            <person name="Bhattacharyya A."/>
            <person name="Reznik G."/>
            <person name="Mikhailova N."/>
            <person name="Lapidus A."/>
            <person name="Chu L."/>
            <person name="Mazur M."/>
            <person name="Goltsman E."/>
            <person name="Larsen N."/>
            <person name="D'Souza M."/>
            <person name="Walunas T."/>
            <person name="Grechkin Y."/>
            <person name="Pusch G."/>
            <person name="Haselkorn R."/>
            <person name="Fonstein M."/>
            <person name="Ehrlich S.D."/>
            <person name="Overbeek R."/>
            <person name="Kyrpides N.C."/>
        </authorList>
    </citation>
    <scope>NUCLEOTIDE SEQUENCE [LARGE SCALE GENOMIC DNA]</scope>
    <source>
        <strain>ATCC 14579 / DSM 31 / CCUG 7414 / JCM 2152 / NBRC 15305 / NCIMB 9373 / NCTC 2599 / NRRL B-3711</strain>
    </source>
</reference>
<keyword id="KW-0067">ATP-binding</keyword>
<keyword id="KW-0173">Coenzyme A biosynthesis</keyword>
<keyword id="KW-0963">Cytoplasm</keyword>
<keyword id="KW-0418">Kinase</keyword>
<keyword id="KW-0479">Metal-binding</keyword>
<keyword id="KW-0547">Nucleotide-binding</keyword>
<keyword id="KW-0630">Potassium</keyword>
<keyword id="KW-1185">Reference proteome</keyword>
<keyword id="KW-0808">Transferase</keyword>
<organism>
    <name type="scientific">Bacillus cereus (strain ATCC 14579 / DSM 31 / CCUG 7414 / JCM 2152 / NBRC 15305 / NCIMB 9373 / NCTC 2599 / NRRL B-3711)</name>
    <dbReference type="NCBI Taxonomy" id="226900"/>
    <lineage>
        <taxon>Bacteria</taxon>
        <taxon>Bacillati</taxon>
        <taxon>Bacillota</taxon>
        <taxon>Bacilli</taxon>
        <taxon>Bacillales</taxon>
        <taxon>Bacillaceae</taxon>
        <taxon>Bacillus</taxon>
        <taxon>Bacillus cereus group</taxon>
    </lineage>
</organism>
<gene>
    <name evidence="1" type="primary">coaX</name>
    <name type="ordered locus">BC_0073</name>
</gene>
<sequence length="262" mass="29136">MIFVLDVGNTNAVLGVFEEGELRQHWRMETDRHKTEDEYGMLVKQLLEHEGLSFEDVKGIIVSSVVPPIMFALERMCEKYFKIKPLVVGPGIKTGLNIKYENPREVGADRIVNAVAGIHLYGSPLIIVDFGTATTYCYINEEKHYMGGVITPGIMISAEALYSRAAKLPRIEITKPSSVVGKNTVSAMQSGILYGYVGQVEGIVKRMKEEARQEPKVIATGGLAKLISEESNVIDIVDPFLTLKGLYMLYERNANLQHEKGE</sequence>
<name>COAX_BACCR</name>